<comment type="function">
    <text evidence="1">Modifies, by uridylylation and deuridylylation, the PII regulatory proteins (GlnB and homologs), in response to the nitrogen status of the cell that GlnD senses through the glutamine level. Under low glutamine levels, catalyzes the conversion of the PII proteins and UTP to PII-UMP and PPi, while under higher glutamine levels, GlnD hydrolyzes PII-UMP to PII and UMP (deuridylylation). Thus, controls uridylylation state and activity of the PII proteins, and plays an important role in the regulation of nitrogen assimilation and metabolism.</text>
</comment>
<comment type="catalytic activity">
    <reaction evidence="1">
        <text>[protein-PII]-L-tyrosine + UTP = [protein-PII]-uridylyl-L-tyrosine + diphosphate</text>
        <dbReference type="Rhea" id="RHEA:13673"/>
        <dbReference type="Rhea" id="RHEA-COMP:12147"/>
        <dbReference type="Rhea" id="RHEA-COMP:12148"/>
        <dbReference type="ChEBI" id="CHEBI:33019"/>
        <dbReference type="ChEBI" id="CHEBI:46398"/>
        <dbReference type="ChEBI" id="CHEBI:46858"/>
        <dbReference type="ChEBI" id="CHEBI:90602"/>
        <dbReference type="EC" id="2.7.7.59"/>
    </reaction>
</comment>
<comment type="catalytic activity">
    <reaction evidence="1">
        <text>[protein-PII]-uridylyl-L-tyrosine + H2O = [protein-PII]-L-tyrosine + UMP + H(+)</text>
        <dbReference type="Rhea" id="RHEA:48600"/>
        <dbReference type="Rhea" id="RHEA-COMP:12147"/>
        <dbReference type="Rhea" id="RHEA-COMP:12148"/>
        <dbReference type="ChEBI" id="CHEBI:15377"/>
        <dbReference type="ChEBI" id="CHEBI:15378"/>
        <dbReference type="ChEBI" id="CHEBI:46858"/>
        <dbReference type="ChEBI" id="CHEBI:57865"/>
        <dbReference type="ChEBI" id="CHEBI:90602"/>
    </reaction>
</comment>
<comment type="cofactor">
    <cofactor evidence="1">
        <name>Mg(2+)</name>
        <dbReference type="ChEBI" id="CHEBI:18420"/>
    </cofactor>
</comment>
<comment type="activity regulation">
    <text evidence="1">Uridylyltransferase (UTase) activity is inhibited by glutamine, while glutamine activates uridylyl-removing (UR) activity.</text>
</comment>
<comment type="domain">
    <text evidence="1">Has four distinct domains: an N-terminal nucleotidyltransferase (NT) domain responsible for UTase activity, a central HD domain that encodes UR activity, and two C-terminal ACT domains that seem to have a role in glutamine sensing.</text>
</comment>
<comment type="similarity">
    <text evidence="1">Belongs to the GlnD family.</text>
</comment>
<reference key="1">
    <citation type="journal article" date="2009" name="PLoS Genet.">
        <title>Organised genome dynamics in the Escherichia coli species results in highly diverse adaptive paths.</title>
        <authorList>
            <person name="Touchon M."/>
            <person name="Hoede C."/>
            <person name="Tenaillon O."/>
            <person name="Barbe V."/>
            <person name="Baeriswyl S."/>
            <person name="Bidet P."/>
            <person name="Bingen E."/>
            <person name="Bonacorsi S."/>
            <person name="Bouchier C."/>
            <person name="Bouvet O."/>
            <person name="Calteau A."/>
            <person name="Chiapello H."/>
            <person name="Clermont O."/>
            <person name="Cruveiller S."/>
            <person name="Danchin A."/>
            <person name="Diard M."/>
            <person name="Dossat C."/>
            <person name="Karoui M.E."/>
            <person name="Frapy E."/>
            <person name="Garry L."/>
            <person name="Ghigo J.M."/>
            <person name="Gilles A.M."/>
            <person name="Johnson J."/>
            <person name="Le Bouguenec C."/>
            <person name="Lescat M."/>
            <person name="Mangenot S."/>
            <person name="Martinez-Jehanne V."/>
            <person name="Matic I."/>
            <person name="Nassif X."/>
            <person name="Oztas S."/>
            <person name="Petit M.A."/>
            <person name="Pichon C."/>
            <person name="Rouy Z."/>
            <person name="Ruf C.S."/>
            <person name="Schneider D."/>
            <person name="Tourret J."/>
            <person name="Vacherie B."/>
            <person name="Vallenet D."/>
            <person name="Medigue C."/>
            <person name="Rocha E.P.C."/>
            <person name="Denamur E."/>
        </authorList>
    </citation>
    <scope>NUCLEOTIDE SEQUENCE [LARGE SCALE GENOMIC DNA]</scope>
    <source>
        <strain>IAI1</strain>
    </source>
</reference>
<keyword id="KW-0378">Hydrolase</keyword>
<keyword id="KW-0460">Magnesium</keyword>
<keyword id="KW-0511">Multifunctional enzyme</keyword>
<keyword id="KW-0548">Nucleotidyltransferase</keyword>
<keyword id="KW-0677">Repeat</keyword>
<keyword id="KW-0808">Transferase</keyword>
<organism>
    <name type="scientific">Escherichia coli O8 (strain IAI1)</name>
    <dbReference type="NCBI Taxonomy" id="585034"/>
    <lineage>
        <taxon>Bacteria</taxon>
        <taxon>Pseudomonadati</taxon>
        <taxon>Pseudomonadota</taxon>
        <taxon>Gammaproteobacteria</taxon>
        <taxon>Enterobacterales</taxon>
        <taxon>Enterobacteriaceae</taxon>
        <taxon>Escherichia</taxon>
    </lineage>
</organism>
<gene>
    <name evidence="1" type="primary">glnD</name>
    <name type="ordered locus">ECIAI1_0164</name>
</gene>
<accession>B7M1A6</accession>
<proteinExistence type="inferred from homology"/>
<feature type="chain" id="PRO_1000119364" description="Bifunctional uridylyltransferase/uridylyl-removing enzyme">
    <location>
        <begin position="1"/>
        <end position="890"/>
    </location>
</feature>
<feature type="domain" description="HD" evidence="2">
    <location>
        <begin position="468"/>
        <end position="590"/>
    </location>
</feature>
<feature type="domain" description="ACT 1" evidence="1">
    <location>
        <begin position="709"/>
        <end position="789"/>
    </location>
</feature>
<feature type="domain" description="ACT 2" evidence="1">
    <location>
        <begin position="816"/>
        <end position="890"/>
    </location>
</feature>
<feature type="region of interest" description="Uridylyltransferase">
    <location>
        <begin position="1"/>
        <end position="349"/>
    </location>
</feature>
<feature type="region of interest" description="Uridylyl-removing">
    <location>
        <begin position="350"/>
        <end position="708"/>
    </location>
</feature>
<dbReference type="EC" id="2.7.7.59" evidence="1"/>
<dbReference type="EC" id="3.1.4.-" evidence="1"/>
<dbReference type="EMBL" id="CU928160">
    <property type="protein sequence ID" value="CAQ97052.1"/>
    <property type="molecule type" value="Genomic_DNA"/>
</dbReference>
<dbReference type="RefSeq" id="WP_001094571.1">
    <property type="nucleotide sequence ID" value="NC_011741.1"/>
</dbReference>
<dbReference type="SMR" id="B7M1A6"/>
<dbReference type="GeneID" id="75202020"/>
<dbReference type="KEGG" id="ecr:ECIAI1_0164"/>
<dbReference type="HOGENOM" id="CLU_012833_0_0_6"/>
<dbReference type="GO" id="GO:0008773">
    <property type="term" value="F:[protein-PII] uridylyltransferase activity"/>
    <property type="evidence" value="ECO:0007669"/>
    <property type="project" value="UniProtKB-UniRule"/>
</dbReference>
<dbReference type="GO" id="GO:0008081">
    <property type="term" value="F:phosphoric diester hydrolase activity"/>
    <property type="evidence" value="ECO:0007669"/>
    <property type="project" value="UniProtKB-UniRule"/>
</dbReference>
<dbReference type="GO" id="GO:0006808">
    <property type="term" value="P:regulation of nitrogen utilization"/>
    <property type="evidence" value="ECO:0007669"/>
    <property type="project" value="UniProtKB-UniRule"/>
</dbReference>
<dbReference type="CDD" id="cd04899">
    <property type="entry name" value="ACT_ACR-UUR-like_2"/>
    <property type="match status" value="1"/>
</dbReference>
<dbReference type="CDD" id="cd04900">
    <property type="entry name" value="ACT_UUR-like_1"/>
    <property type="match status" value="1"/>
</dbReference>
<dbReference type="CDD" id="cd00077">
    <property type="entry name" value="HDc"/>
    <property type="match status" value="1"/>
</dbReference>
<dbReference type="CDD" id="cd05401">
    <property type="entry name" value="NT_GlnE_GlnD_like"/>
    <property type="match status" value="1"/>
</dbReference>
<dbReference type="FunFam" id="1.10.3210.10:FF:000005">
    <property type="entry name" value="Bifunctional uridylyltransferase/uridylyl-removing enzyme"/>
    <property type="match status" value="1"/>
</dbReference>
<dbReference type="Gene3D" id="1.10.3210.10">
    <property type="entry name" value="Hypothetical protein af1432"/>
    <property type="match status" value="1"/>
</dbReference>
<dbReference type="HAMAP" id="MF_00277">
    <property type="entry name" value="PII_uridylyl_transf"/>
    <property type="match status" value="1"/>
</dbReference>
<dbReference type="InterPro" id="IPR045865">
    <property type="entry name" value="ACT-like_dom_sf"/>
</dbReference>
<dbReference type="InterPro" id="IPR002912">
    <property type="entry name" value="ACT_dom"/>
</dbReference>
<dbReference type="InterPro" id="IPR003607">
    <property type="entry name" value="HD/PDEase_dom"/>
</dbReference>
<dbReference type="InterPro" id="IPR006674">
    <property type="entry name" value="HD_domain"/>
</dbReference>
<dbReference type="InterPro" id="IPR043519">
    <property type="entry name" value="NT_sf"/>
</dbReference>
<dbReference type="InterPro" id="IPR013546">
    <property type="entry name" value="PII_UdlTrfase/GS_AdlTrfase"/>
</dbReference>
<dbReference type="InterPro" id="IPR002934">
    <property type="entry name" value="Polymerase_NTP_transf_dom"/>
</dbReference>
<dbReference type="InterPro" id="IPR010043">
    <property type="entry name" value="UTase/UR"/>
</dbReference>
<dbReference type="NCBIfam" id="NF002487">
    <property type="entry name" value="PRK01759.1"/>
    <property type="match status" value="1"/>
</dbReference>
<dbReference type="NCBIfam" id="NF003448">
    <property type="entry name" value="PRK05007.1"/>
    <property type="match status" value="1"/>
</dbReference>
<dbReference type="NCBIfam" id="TIGR01693">
    <property type="entry name" value="UTase_glnD"/>
    <property type="match status" value="1"/>
</dbReference>
<dbReference type="PANTHER" id="PTHR47320">
    <property type="entry name" value="BIFUNCTIONAL URIDYLYLTRANSFERASE/URIDYLYL-REMOVING ENZYME"/>
    <property type="match status" value="1"/>
</dbReference>
<dbReference type="PANTHER" id="PTHR47320:SF1">
    <property type="entry name" value="BIFUNCTIONAL URIDYLYLTRANSFERASE_URIDYLYL-REMOVING ENZYME"/>
    <property type="match status" value="1"/>
</dbReference>
<dbReference type="Pfam" id="PF01842">
    <property type="entry name" value="ACT"/>
    <property type="match status" value="2"/>
</dbReference>
<dbReference type="Pfam" id="PF08335">
    <property type="entry name" value="GlnD_UR_UTase"/>
    <property type="match status" value="1"/>
</dbReference>
<dbReference type="Pfam" id="PF01966">
    <property type="entry name" value="HD"/>
    <property type="match status" value="1"/>
</dbReference>
<dbReference type="Pfam" id="PF01909">
    <property type="entry name" value="NTP_transf_2"/>
    <property type="match status" value="1"/>
</dbReference>
<dbReference type="PIRSF" id="PIRSF006288">
    <property type="entry name" value="PII_uridyltransf"/>
    <property type="match status" value="1"/>
</dbReference>
<dbReference type="SMART" id="SM00471">
    <property type="entry name" value="HDc"/>
    <property type="match status" value="1"/>
</dbReference>
<dbReference type="SUPFAM" id="SSF55021">
    <property type="entry name" value="ACT-like"/>
    <property type="match status" value="2"/>
</dbReference>
<dbReference type="SUPFAM" id="SSF109604">
    <property type="entry name" value="HD-domain/PDEase-like"/>
    <property type="match status" value="1"/>
</dbReference>
<dbReference type="SUPFAM" id="SSF81301">
    <property type="entry name" value="Nucleotidyltransferase"/>
    <property type="match status" value="1"/>
</dbReference>
<dbReference type="SUPFAM" id="SSF81593">
    <property type="entry name" value="Nucleotidyltransferase substrate binding subunit/domain"/>
    <property type="match status" value="1"/>
</dbReference>
<dbReference type="PROSITE" id="PS51671">
    <property type="entry name" value="ACT"/>
    <property type="match status" value="2"/>
</dbReference>
<dbReference type="PROSITE" id="PS51831">
    <property type="entry name" value="HD"/>
    <property type="match status" value="1"/>
</dbReference>
<evidence type="ECO:0000255" key="1">
    <source>
        <dbReference type="HAMAP-Rule" id="MF_00277"/>
    </source>
</evidence>
<evidence type="ECO:0000255" key="2">
    <source>
        <dbReference type="PROSITE-ProRule" id="PRU01175"/>
    </source>
</evidence>
<protein>
    <recommendedName>
        <fullName evidence="1">Bifunctional uridylyltransferase/uridylyl-removing enzyme</fullName>
        <shortName evidence="1">UTase/UR</shortName>
    </recommendedName>
    <alternativeName>
        <fullName evidence="1">Bifunctional [protein-PII] modification enzyme</fullName>
    </alternativeName>
    <alternativeName>
        <fullName evidence="1">Bifunctional nitrogen sensor protein</fullName>
    </alternativeName>
    <domain>
        <recommendedName>
            <fullName evidence="1">[Protein-PII] uridylyltransferase</fullName>
            <shortName evidence="1">PII uridylyltransferase</shortName>
            <shortName evidence="1">UTase</shortName>
            <ecNumber evidence="1">2.7.7.59</ecNumber>
        </recommendedName>
    </domain>
    <domain>
        <recommendedName>
            <fullName evidence="1">[Protein-PII]-UMP uridylyl-removing enzyme</fullName>
            <shortName evidence="1">UR</shortName>
            <ecNumber evidence="1">3.1.4.-</ecNumber>
        </recommendedName>
    </domain>
</protein>
<sequence length="890" mass="102396">MNTLPEQYANTALPTLPGQPQNPCVWPRDELTVGGIKAHIDTFQRWLGDAFDNGISAEQLIEARTEFIDQLLQRLWIEAGFSQIADLALVAVGGYGRGELHPLSDIDLLILSRKKLPDDQAQKVGELLTLLWDVKLEVGHSVRTLEECMLEGLSDLTVATNLIESRLLIGDVALFLELQKHIFSEGFWPSDKFYAAKVEEQNQRHQRYHGTSYNLEPDIKSSPGGLRDIHTLQWVARRHFGATSLDEMVGFGFLTSAERAELNECLHILWRIRFALHLVVSRYDNRLLFDRQLSVAQRLNYSGEGNEPVERMMKDYFRVTRRVSELNQMLLQLFDEAILALPADEKPRPIDDEFQLRGTLIDLRDETLFMRQPEAILRMFYTMVRNSAITGIYSTTLRQLRHARRHLQQPLCNIPEARKLFLSILRHPGAVRRGLLPMHRHSVLGAYMPQWSHIVGQMQFDLFHAYTVDEHTIRVMLKLESFASEETRQRHPLCVDVWPRLPSTELIFIAALFHDIAKGRGGDHSILGAQDVVHFAELHGLNSRETQLVAWLVRQHLLMSVTAQRRDIQDPEVIKQFAEEVQTENRLRYLVCLTVADICATNETLWNSWKQSLLRELYFATEKQLRRGMQNTPDMRERVRHHQLQALALLRMDNIDEEALHQIWSRCRANYFVRHSPNQLAWHARHLLQHDLSKPLVLLSPQATRGGTEIFIWSPDRPYLFAAVCAELDRRNLSVHDAQIFTTRDGMAMDTFIVLEPDGSPLSADRHEVIRFGLEQVLTQSSWQPPQPRRQPAKLRHFTVETEVTFLPTHTDRKSFLELIALDQPGLLARVGKIFADLGISLHGARITTIGERVEDLFIIATADRRALNNELQQEVHQRLTEALNPNDKG</sequence>
<name>GLND_ECO8A</name>